<comment type="function">
    <text evidence="1">This protein binds specifically to 23S rRNA; its binding is stimulated by other ribosomal proteins, e.g. L4, L17, and L20. It is important during the early stages of 50S assembly. It makes multiple contacts with different domains of the 23S rRNA in the assembled 50S subunit and ribosome (By similarity).</text>
</comment>
<comment type="function">
    <text evidence="1">The globular domain of the protein is located near the polypeptide exit tunnel on the outside of the subunit, while an extended beta-hairpin is found that lines the wall of the exit tunnel in the center of the 70S ribosome.</text>
</comment>
<comment type="subunit">
    <text evidence="1">Part of the 50S ribosomal subunit.</text>
</comment>
<comment type="similarity">
    <text evidence="1">Belongs to the universal ribosomal protein uL22 family.</text>
</comment>
<gene>
    <name evidence="1" type="primary">rplV</name>
    <name type="ordered locus">WS1711</name>
</gene>
<reference key="1">
    <citation type="journal article" date="2003" name="Proc. Natl. Acad. Sci. U.S.A.">
        <title>Complete genome sequence and analysis of Wolinella succinogenes.</title>
        <authorList>
            <person name="Baar C."/>
            <person name="Eppinger M."/>
            <person name="Raddatz G."/>
            <person name="Simon J."/>
            <person name="Lanz C."/>
            <person name="Klimmek O."/>
            <person name="Nandakumar R."/>
            <person name="Gross R."/>
            <person name="Rosinus A."/>
            <person name="Keller H."/>
            <person name="Jagtap P."/>
            <person name="Linke B."/>
            <person name="Meyer F."/>
            <person name="Lederer H."/>
            <person name="Schuster S.C."/>
        </authorList>
    </citation>
    <scope>NUCLEOTIDE SEQUENCE [LARGE SCALE GENOMIC DNA]</scope>
    <source>
        <strain>ATCC 29543 / DSM 1740 / CCUG 13145 / JCM 31913 / LMG 7466 / NCTC 11488 / FDC 602W</strain>
    </source>
</reference>
<sequence length="109" mass="11787">MSKALLRYIRLSPTKARLVAREVQGMNAELAIASLEFMPNKAAKVISKVIASAVANGGMGAENAVVKSCRVDAGPVLRRFTPRARGRATPIRKPTSHVFVEVVEQSKDK</sequence>
<feature type="chain" id="PRO_0000125264" description="Large ribosomal subunit protein uL22">
    <location>
        <begin position="1"/>
        <end position="109"/>
    </location>
</feature>
<name>RL22_WOLSU</name>
<keyword id="KW-1185">Reference proteome</keyword>
<keyword id="KW-0687">Ribonucleoprotein</keyword>
<keyword id="KW-0689">Ribosomal protein</keyword>
<keyword id="KW-0694">RNA-binding</keyword>
<keyword id="KW-0699">rRNA-binding</keyword>
<proteinExistence type="inferred from homology"/>
<accession>Q7M8D9</accession>
<organism>
    <name type="scientific">Wolinella succinogenes (strain ATCC 29543 / DSM 1740 / CCUG 13145 / JCM 31913 / LMG 7466 / NCTC 11488 / FDC 602W)</name>
    <name type="common">Vibrio succinogenes</name>
    <dbReference type="NCBI Taxonomy" id="273121"/>
    <lineage>
        <taxon>Bacteria</taxon>
        <taxon>Pseudomonadati</taxon>
        <taxon>Campylobacterota</taxon>
        <taxon>Epsilonproteobacteria</taxon>
        <taxon>Campylobacterales</taxon>
        <taxon>Helicobacteraceae</taxon>
        <taxon>Wolinella</taxon>
    </lineage>
</organism>
<dbReference type="EMBL" id="BX571661">
    <property type="protein sequence ID" value="CAE10737.1"/>
    <property type="molecule type" value="Genomic_DNA"/>
</dbReference>
<dbReference type="RefSeq" id="WP_011139521.1">
    <property type="nucleotide sequence ID" value="NC_005090.1"/>
</dbReference>
<dbReference type="SMR" id="Q7M8D9"/>
<dbReference type="STRING" id="273121.WS1711"/>
<dbReference type="KEGG" id="wsu:WS1711"/>
<dbReference type="eggNOG" id="COG0091">
    <property type="taxonomic scope" value="Bacteria"/>
</dbReference>
<dbReference type="HOGENOM" id="CLU_083987_3_2_7"/>
<dbReference type="Proteomes" id="UP000000422">
    <property type="component" value="Chromosome"/>
</dbReference>
<dbReference type="GO" id="GO:0022625">
    <property type="term" value="C:cytosolic large ribosomal subunit"/>
    <property type="evidence" value="ECO:0007669"/>
    <property type="project" value="TreeGrafter"/>
</dbReference>
<dbReference type="GO" id="GO:0019843">
    <property type="term" value="F:rRNA binding"/>
    <property type="evidence" value="ECO:0007669"/>
    <property type="project" value="UniProtKB-UniRule"/>
</dbReference>
<dbReference type="GO" id="GO:0003735">
    <property type="term" value="F:structural constituent of ribosome"/>
    <property type="evidence" value="ECO:0007669"/>
    <property type="project" value="InterPro"/>
</dbReference>
<dbReference type="GO" id="GO:0006412">
    <property type="term" value="P:translation"/>
    <property type="evidence" value="ECO:0007669"/>
    <property type="project" value="UniProtKB-UniRule"/>
</dbReference>
<dbReference type="CDD" id="cd00336">
    <property type="entry name" value="Ribosomal_L22"/>
    <property type="match status" value="1"/>
</dbReference>
<dbReference type="Gene3D" id="3.90.470.10">
    <property type="entry name" value="Ribosomal protein L22/L17"/>
    <property type="match status" value="1"/>
</dbReference>
<dbReference type="HAMAP" id="MF_01331_B">
    <property type="entry name" value="Ribosomal_uL22_B"/>
    <property type="match status" value="1"/>
</dbReference>
<dbReference type="InterPro" id="IPR001063">
    <property type="entry name" value="Ribosomal_uL22"/>
</dbReference>
<dbReference type="InterPro" id="IPR005727">
    <property type="entry name" value="Ribosomal_uL22_bac/chlpt-type"/>
</dbReference>
<dbReference type="InterPro" id="IPR047867">
    <property type="entry name" value="Ribosomal_uL22_bac/org-type"/>
</dbReference>
<dbReference type="InterPro" id="IPR018260">
    <property type="entry name" value="Ribosomal_uL22_CS"/>
</dbReference>
<dbReference type="InterPro" id="IPR036394">
    <property type="entry name" value="Ribosomal_uL22_sf"/>
</dbReference>
<dbReference type="NCBIfam" id="TIGR01044">
    <property type="entry name" value="rplV_bact"/>
    <property type="match status" value="1"/>
</dbReference>
<dbReference type="PANTHER" id="PTHR13501">
    <property type="entry name" value="CHLOROPLAST 50S RIBOSOMAL PROTEIN L22-RELATED"/>
    <property type="match status" value="1"/>
</dbReference>
<dbReference type="PANTHER" id="PTHR13501:SF8">
    <property type="entry name" value="LARGE RIBOSOMAL SUBUNIT PROTEIN UL22M"/>
    <property type="match status" value="1"/>
</dbReference>
<dbReference type="Pfam" id="PF00237">
    <property type="entry name" value="Ribosomal_L22"/>
    <property type="match status" value="1"/>
</dbReference>
<dbReference type="SUPFAM" id="SSF54843">
    <property type="entry name" value="Ribosomal protein L22"/>
    <property type="match status" value="1"/>
</dbReference>
<dbReference type="PROSITE" id="PS00464">
    <property type="entry name" value="RIBOSOMAL_L22"/>
    <property type="match status" value="1"/>
</dbReference>
<evidence type="ECO:0000255" key="1">
    <source>
        <dbReference type="HAMAP-Rule" id="MF_01331"/>
    </source>
</evidence>
<evidence type="ECO:0000305" key="2"/>
<protein>
    <recommendedName>
        <fullName evidence="1">Large ribosomal subunit protein uL22</fullName>
    </recommendedName>
    <alternativeName>
        <fullName evidence="2">50S ribosomal protein L22</fullName>
    </alternativeName>
</protein>